<protein>
    <recommendedName>
        <fullName>Plasma kallikrein</fullName>
        <ecNumber>3.4.21.34</ecNumber>
    </recommendedName>
    <alternativeName>
        <fullName>Fletcher factor</fullName>
    </alternativeName>
    <alternativeName>
        <fullName>Kininogenin</fullName>
    </alternativeName>
    <alternativeName>
        <fullName>Plasma prekallikrein</fullName>
    </alternativeName>
    <component>
        <recommendedName>
            <fullName>Plasma kallikrein heavy chain</fullName>
        </recommendedName>
    </component>
    <component>
        <recommendedName>
            <fullName>Plasma kallikrein light chain</fullName>
        </recommendedName>
    </component>
</protein>
<proteinExistence type="evidence at protein level"/>
<comment type="function">
    <text>The enzyme cleaves Lys-Arg and Arg-Ser bonds. It activates, in a reciprocal reaction, factor XII after its binding to a negatively charged surface. It also releases bradykinin from HMW kininogen and may also play a role in the renin-angiotensin system by converting prorenin into renin.</text>
</comment>
<comment type="catalytic activity">
    <reaction>
        <text>Cleaves selectively Arg-|-Xaa and Lys-|-Xaa bonds, including Lys-|-Arg and Arg-|-Ser bonds in (human) kininogen to release bradykinin.</text>
        <dbReference type="EC" id="3.4.21.34"/>
    </reaction>
</comment>
<comment type="activity regulation">
    <text evidence="1">Inhibited by SERPINA5.</text>
</comment>
<comment type="subunit">
    <text evidence="1">Forms a heterodimer with SERPINA5. The zymogen is activated by factor XIIa, which cleaves the molecule into a light chain, which contains the active site, and a heavy chain, which associates with HMW kininogen. These chains are linked by one or more disulfide bonds (By similarity).</text>
</comment>
<comment type="subcellular location">
    <subcellularLocation>
        <location>Secreted</location>
    </subcellularLocation>
</comment>
<comment type="similarity">
    <text evidence="3">Belongs to the peptidase S1 family. Plasma kallikrein subfamily.</text>
</comment>
<name>KLKB1_RAT</name>
<gene>
    <name type="primary">Klkb1</name>
    <name type="synonym">Klk3</name>
    <name type="synonym">Pk</name>
</gene>
<sequence length="638" mass="71274">MILFKQVGYFVSLFATVSCGCLSQLYANTFFRGGDLAAIYTPDAQHCQKMCTFHPRCLLFSFLAVSPTKETDKRFGCFMKESITGTLPRIHRTGAISGHSLKQCGHQLSACHQDIYEGLDMRGSNFNISKTDSIEECQKLCTNNIHCQFFTYATKAFHRPEYRKSCLLKRSSSGTPTSIKPVDNLVSGFSLKSCALSEIGCPMDIFQHFAFADLNVSQVVTPDAFVCRTVCTFHPNCLFFTFYTNEWETESQRNVCFLKTSKSGRPSPPIIQENAVSGYSLFTCRKARPEPCHFKIYSGVAFEGEELNATFVQGADACQETCTKTIRCQFFTYSLLPQDCKAEGCKCSLRLSTDGSPTRITYEAQGSSGYSLRLCKVVESSDCTTKINARIVGGTNSSLGEWPWQVSLQVKLVSQNHMCGGSIIGRQWILTAAHCFDGIPYPDVWRIYGGILNLSEITNKTPFSSIKELIIHQKYKMSEGSYDIALIKLQTPLNYTEFQKPICLPSKADTNTIYTNCWVTGWGYTKERGETQNILQKATIPLVPNEECQKKYRDYVITKQMICAGYKEGGIDACKGDSGGPLVCKHSGRWQLVGITSWGEGCARKEQPGVYTKVAEYIDWILEKIQSSKERALETSPA</sequence>
<reference key="1">
    <citation type="journal article" date="1991" name="Biochemistry">
        <title>Gene structure and chromosomal localization of plasma kallikrein.</title>
        <authorList>
            <person name="Beaubien G."/>
            <person name="Rosinski-Chupin I."/>
            <person name="Mattei M.-G."/>
            <person name="Mbikay M."/>
            <person name="Chretien M."/>
            <person name="Seidah N.G."/>
        </authorList>
    </citation>
    <scope>NUCLEOTIDE SEQUENCE [GENOMIC DNA]</scope>
</reference>
<reference key="2">
    <citation type="journal article" date="1989" name="DNA">
        <title>The cDNA structure of rat plasma kallikrein.</title>
        <authorList>
            <person name="Seidah N.G."/>
            <person name="Ladenheim R."/>
            <person name="Mbikay M."/>
            <person name="Hamelin J."/>
            <person name="Lutfalla G."/>
            <person name="Rougeon F."/>
            <person name="Lazure C."/>
            <person name="Chretien M."/>
        </authorList>
    </citation>
    <scope>NUCLEOTIDE SEQUENCE [MRNA]</scope>
    <scope>PARTIAL PROTEIN SEQUENCE</scope>
    <scope>GLYCOSYLATION AT ASN-396</scope>
</reference>
<accession>P14272</accession>
<feature type="signal peptide">
    <location>
        <begin position="1"/>
        <end position="19"/>
    </location>
</feature>
<feature type="chain" id="PRO_0000028025" description="Plasma kallikrein heavy chain">
    <location>
        <begin position="20"/>
        <end position="390"/>
    </location>
</feature>
<feature type="chain" id="PRO_0000028026" description="Plasma kallikrein light chain">
    <location>
        <begin position="391"/>
        <end position="638"/>
    </location>
</feature>
<feature type="domain" description="Apple 1" evidence="4">
    <location>
        <begin position="21"/>
        <end position="104"/>
    </location>
</feature>
<feature type="domain" description="Apple 2" evidence="4">
    <location>
        <begin position="111"/>
        <end position="194"/>
    </location>
</feature>
<feature type="domain" description="Apple 3" evidence="4">
    <location>
        <begin position="201"/>
        <end position="284"/>
    </location>
</feature>
<feature type="domain" description="Apple 4" evidence="4">
    <location>
        <begin position="292"/>
        <end position="375"/>
    </location>
</feature>
<feature type="domain" description="Peptidase S1" evidence="3">
    <location>
        <begin position="391"/>
        <end position="626"/>
    </location>
</feature>
<feature type="active site" description="Charge relay system">
    <location>
        <position position="434"/>
    </location>
</feature>
<feature type="active site" description="Charge relay system">
    <location>
        <position position="483"/>
    </location>
</feature>
<feature type="active site" description="Charge relay system">
    <location>
        <position position="578"/>
    </location>
</feature>
<feature type="glycosylation site" description="N-linked (GlcNAc...) asparagine" evidence="6">
    <location>
        <position position="127"/>
    </location>
</feature>
<feature type="glycosylation site" description="N-linked (GlcNAc...) asparagine" evidence="2">
    <location>
        <position position="215"/>
    </location>
</feature>
<feature type="glycosylation site" description="N-linked (GlcNAc...) asparagine" evidence="6">
    <location>
        <position position="308"/>
    </location>
</feature>
<feature type="glycosylation site" description="N-linked (GlcNAc...) asparagine" evidence="5">
    <location>
        <position position="396"/>
    </location>
</feature>
<feature type="glycosylation site" description="N-linked (GlcNAc...) asparagine" evidence="6">
    <location>
        <position position="453"/>
    </location>
</feature>
<feature type="glycosylation site" description="N-linked (GlcNAc...) asparagine" evidence="6">
    <location>
        <position position="494"/>
    </location>
</feature>
<feature type="disulfide bond" evidence="1">
    <location>
        <begin position="21"/>
        <end position="104"/>
    </location>
</feature>
<feature type="disulfide bond" evidence="1">
    <location>
        <begin position="47"/>
        <end position="77"/>
    </location>
</feature>
<feature type="disulfide bond" evidence="1">
    <location>
        <begin position="51"/>
        <end position="57"/>
    </location>
</feature>
<feature type="disulfide bond" evidence="1">
    <location>
        <begin position="111"/>
        <end position="194"/>
    </location>
</feature>
<feature type="disulfide bond" evidence="1">
    <location>
        <begin position="137"/>
        <end position="166"/>
    </location>
</feature>
<feature type="disulfide bond" evidence="1">
    <location>
        <begin position="141"/>
        <end position="147"/>
    </location>
</feature>
<feature type="disulfide bond" evidence="1">
    <location>
        <begin position="201"/>
        <end position="284"/>
    </location>
</feature>
<feature type="disulfide bond" evidence="1">
    <location>
        <begin position="227"/>
        <end position="256"/>
    </location>
</feature>
<feature type="disulfide bond" evidence="1">
    <location>
        <begin position="231"/>
        <end position="237"/>
    </location>
</feature>
<feature type="disulfide bond" evidence="1">
    <location>
        <begin position="292"/>
        <end position="375"/>
    </location>
</feature>
<feature type="disulfide bond" evidence="1">
    <location>
        <begin position="318"/>
        <end position="347"/>
    </location>
</feature>
<feature type="disulfide bond" evidence="1">
    <location>
        <begin position="322"/>
        <end position="328"/>
    </location>
</feature>
<feature type="disulfide bond" evidence="1">
    <location>
        <begin position="340"/>
        <end position="345"/>
    </location>
</feature>
<feature type="disulfide bond" evidence="1">
    <location>
        <begin position="383"/>
        <end position="503"/>
    </location>
</feature>
<feature type="disulfide bond" evidence="1">
    <location>
        <begin position="419"/>
        <end position="435"/>
    </location>
</feature>
<feature type="disulfide bond" evidence="1">
    <location>
        <begin position="517"/>
        <end position="584"/>
    </location>
</feature>
<feature type="disulfide bond" evidence="1">
    <location>
        <begin position="548"/>
        <end position="563"/>
    </location>
</feature>
<feature type="disulfide bond" evidence="1">
    <location>
        <begin position="574"/>
        <end position="602"/>
    </location>
</feature>
<dbReference type="EC" id="3.4.21.34"/>
<dbReference type="EMBL" id="M62357">
    <property type="protein sequence ID" value="AAA74563.1"/>
    <property type="molecule type" value="Genomic_DNA"/>
</dbReference>
<dbReference type="EMBL" id="M62358">
    <property type="protein sequence ID" value="AAA74563.1"/>
    <property type="status" value="JOINED"/>
    <property type="molecule type" value="Genomic_DNA"/>
</dbReference>
<dbReference type="EMBL" id="M62346">
    <property type="protein sequence ID" value="AAA74563.1"/>
    <property type="status" value="JOINED"/>
    <property type="molecule type" value="Genomic_DNA"/>
</dbReference>
<dbReference type="EMBL" id="M62347">
    <property type="protein sequence ID" value="AAA74563.1"/>
    <property type="status" value="JOINED"/>
    <property type="molecule type" value="Genomic_DNA"/>
</dbReference>
<dbReference type="EMBL" id="M62349">
    <property type="protein sequence ID" value="AAA74563.1"/>
    <property type="status" value="JOINED"/>
    <property type="molecule type" value="Genomic_DNA"/>
</dbReference>
<dbReference type="EMBL" id="M62350">
    <property type="protein sequence ID" value="AAA74563.1"/>
    <property type="status" value="JOINED"/>
    <property type="molecule type" value="Genomic_DNA"/>
</dbReference>
<dbReference type="EMBL" id="M62351">
    <property type="protein sequence ID" value="AAA74563.1"/>
    <property type="status" value="JOINED"/>
    <property type="molecule type" value="Genomic_DNA"/>
</dbReference>
<dbReference type="EMBL" id="M62352">
    <property type="protein sequence ID" value="AAA74563.1"/>
    <property type="status" value="JOINED"/>
    <property type="molecule type" value="Genomic_DNA"/>
</dbReference>
<dbReference type="EMBL" id="M62353">
    <property type="protein sequence ID" value="AAA74563.1"/>
    <property type="status" value="JOINED"/>
    <property type="molecule type" value="Genomic_DNA"/>
</dbReference>
<dbReference type="EMBL" id="M62354">
    <property type="protein sequence ID" value="AAA74563.1"/>
    <property type="status" value="JOINED"/>
    <property type="molecule type" value="Genomic_DNA"/>
</dbReference>
<dbReference type="EMBL" id="M62355">
    <property type="protein sequence ID" value="AAA74563.1"/>
    <property type="status" value="JOINED"/>
    <property type="molecule type" value="Genomic_DNA"/>
</dbReference>
<dbReference type="EMBL" id="M62356">
    <property type="protein sequence ID" value="AAA74563.1"/>
    <property type="status" value="JOINED"/>
    <property type="molecule type" value="Genomic_DNA"/>
</dbReference>
<dbReference type="EMBL" id="M30282">
    <property type="protein sequence ID" value="AAA41463.1"/>
    <property type="molecule type" value="mRNA"/>
</dbReference>
<dbReference type="EMBL" id="M58590">
    <property type="protein sequence ID" value="AAA42069.1"/>
    <property type="molecule type" value="mRNA"/>
</dbReference>
<dbReference type="PIR" id="A39180">
    <property type="entry name" value="KQRTPL"/>
</dbReference>
<dbReference type="SMR" id="P14272"/>
<dbReference type="FunCoup" id="P14272">
    <property type="interactions" value="57"/>
</dbReference>
<dbReference type="STRING" id="10116.ENSRNOP00000019237"/>
<dbReference type="BindingDB" id="P14272"/>
<dbReference type="ChEMBL" id="CHEMBL4105792"/>
<dbReference type="MEROPS" id="S01.212"/>
<dbReference type="GlyCosmos" id="P14272">
    <property type="glycosylation" value="6 sites, No reported glycans"/>
</dbReference>
<dbReference type="GlyGen" id="P14272">
    <property type="glycosylation" value="6 sites"/>
</dbReference>
<dbReference type="iPTMnet" id="P14272"/>
<dbReference type="PhosphoSitePlus" id="P14272"/>
<dbReference type="PaxDb" id="10116-ENSRNOP00000019237"/>
<dbReference type="AGR" id="RGD:67382"/>
<dbReference type="RGD" id="67382">
    <property type="gene designation" value="Klkb1"/>
</dbReference>
<dbReference type="eggNOG" id="KOG3627">
    <property type="taxonomic scope" value="Eukaryota"/>
</dbReference>
<dbReference type="InParanoid" id="P14272"/>
<dbReference type="OrthoDB" id="9448935at2759"/>
<dbReference type="PhylomeDB" id="P14272"/>
<dbReference type="BRENDA" id="3.4.21.34">
    <property type="organism ID" value="5301"/>
</dbReference>
<dbReference type="Reactome" id="R-RNO-140837">
    <property type="pathway name" value="Intrinsic Pathway of Fibrin Clot Formation"/>
</dbReference>
<dbReference type="Reactome" id="R-RNO-1592389">
    <property type="pathway name" value="Activation of Matrix Metalloproteinases"/>
</dbReference>
<dbReference type="PRO" id="PR:P14272"/>
<dbReference type="Proteomes" id="UP000002494">
    <property type="component" value="Unplaced"/>
</dbReference>
<dbReference type="GO" id="GO:0005615">
    <property type="term" value="C:extracellular space"/>
    <property type="evidence" value="ECO:0000314"/>
    <property type="project" value="RGD"/>
</dbReference>
<dbReference type="GO" id="GO:0004252">
    <property type="term" value="F:serine-type endopeptidase activity"/>
    <property type="evidence" value="ECO:0007669"/>
    <property type="project" value="UniProtKB-EC"/>
</dbReference>
<dbReference type="GO" id="GO:0007596">
    <property type="term" value="P:blood coagulation"/>
    <property type="evidence" value="ECO:0007669"/>
    <property type="project" value="UniProtKB-KW"/>
</dbReference>
<dbReference type="GO" id="GO:0042730">
    <property type="term" value="P:fibrinolysis"/>
    <property type="evidence" value="ECO:0007669"/>
    <property type="project" value="UniProtKB-KW"/>
</dbReference>
<dbReference type="GO" id="GO:0006954">
    <property type="term" value="P:inflammatory response"/>
    <property type="evidence" value="ECO:0007669"/>
    <property type="project" value="UniProtKB-KW"/>
</dbReference>
<dbReference type="GO" id="GO:0097421">
    <property type="term" value="P:liver regeneration"/>
    <property type="evidence" value="ECO:0000270"/>
    <property type="project" value="RGD"/>
</dbReference>
<dbReference type="GO" id="GO:0031639">
    <property type="term" value="P:plasminogen activation"/>
    <property type="evidence" value="ECO:0000266"/>
    <property type="project" value="RGD"/>
</dbReference>
<dbReference type="GO" id="GO:0051919">
    <property type="term" value="P:positive regulation of fibrinolysis"/>
    <property type="evidence" value="ECO:0000266"/>
    <property type="project" value="RGD"/>
</dbReference>
<dbReference type="CDD" id="cd01100">
    <property type="entry name" value="APPLE_Factor_XI_like"/>
    <property type="match status" value="4"/>
</dbReference>
<dbReference type="CDD" id="cd00190">
    <property type="entry name" value="Tryp_SPc"/>
    <property type="match status" value="1"/>
</dbReference>
<dbReference type="FunFam" id="3.50.4.10:FF:000001">
    <property type="entry name" value="Coagulation factor XI"/>
    <property type="match status" value="4"/>
</dbReference>
<dbReference type="FunFam" id="2.40.10.10:FF:000002">
    <property type="entry name" value="Transmembrane protease serine"/>
    <property type="match status" value="1"/>
</dbReference>
<dbReference type="Gene3D" id="3.50.4.10">
    <property type="entry name" value="Hepatocyte Growth Factor"/>
    <property type="match status" value="4"/>
</dbReference>
<dbReference type="Gene3D" id="2.40.10.10">
    <property type="entry name" value="Trypsin-like serine proteases"/>
    <property type="match status" value="1"/>
</dbReference>
<dbReference type="InterPro" id="IPR000177">
    <property type="entry name" value="Apple"/>
</dbReference>
<dbReference type="InterPro" id="IPR003609">
    <property type="entry name" value="Pan_app"/>
</dbReference>
<dbReference type="InterPro" id="IPR009003">
    <property type="entry name" value="Peptidase_S1_PA"/>
</dbReference>
<dbReference type="InterPro" id="IPR043504">
    <property type="entry name" value="Peptidase_S1_PA_chymotrypsin"/>
</dbReference>
<dbReference type="InterPro" id="IPR001314">
    <property type="entry name" value="Peptidase_S1A"/>
</dbReference>
<dbReference type="InterPro" id="IPR001254">
    <property type="entry name" value="Trypsin_dom"/>
</dbReference>
<dbReference type="InterPro" id="IPR018114">
    <property type="entry name" value="TRYPSIN_HIS"/>
</dbReference>
<dbReference type="InterPro" id="IPR033116">
    <property type="entry name" value="TRYPSIN_SER"/>
</dbReference>
<dbReference type="PANTHER" id="PTHR24252">
    <property type="entry name" value="ACROSIN-RELATED"/>
    <property type="match status" value="1"/>
</dbReference>
<dbReference type="PANTHER" id="PTHR24252:SF27">
    <property type="entry name" value="TRANSMEMBRANE PROTEASE SERINE 3-LIKE"/>
    <property type="match status" value="1"/>
</dbReference>
<dbReference type="Pfam" id="PF00024">
    <property type="entry name" value="PAN_1"/>
    <property type="match status" value="4"/>
</dbReference>
<dbReference type="Pfam" id="PF00089">
    <property type="entry name" value="Trypsin"/>
    <property type="match status" value="1"/>
</dbReference>
<dbReference type="PRINTS" id="PR00005">
    <property type="entry name" value="APPLEDOMAIN"/>
</dbReference>
<dbReference type="PRINTS" id="PR00722">
    <property type="entry name" value="CHYMOTRYPSIN"/>
</dbReference>
<dbReference type="SMART" id="SM00223">
    <property type="entry name" value="APPLE"/>
    <property type="match status" value="4"/>
</dbReference>
<dbReference type="SMART" id="SM00020">
    <property type="entry name" value="Tryp_SPc"/>
    <property type="match status" value="1"/>
</dbReference>
<dbReference type="SUPFAM" id="SSF50494">
    <property type="entry name" value="Trypsin-like serine proteases"/>
    <property type="match status" value="1"/>
</dbReference>
<dbReference type="PROSITE" id="PS00495">
    <property type="entry name" value="APPLE"/>
    <property type="match status" value="4"/>
</dbReference>
<dbReference type="PROSITE" id="PS50948">
    <property type="entry name" value="PAN"/>
    <property type="match status" value="4"/>
</dbReference>
<dbReference type="PROSITE" id="PS50240">
    <property type="entry name" value="TRYPSIN_DOM"/>
    <property type="match status" value="1"/>
</dbReference>
<dbReference type="PROSITE" id="PS00134">
    <property type="entry name" value="TRYPSIN_HIS"/>
    <property type="match status" value="1"/>
</dbReference>
<dbReference type="PROSITE" id="PS00135">
    <property type="entry name" value="TRYPSIN_SER"/>
    <property type="match status" value="1"/>
</dbReference>
<evidence type="ECO:0000250" key="1"/>
<evidence type="ECO:0000255" key="2"/>
<evidence type="ECO:0000255" key="3">
    <source>
        <dbReference type="PROSITE-ProRule" id="PRU00274"/>
    </source>
</evidence>
<evidence type="ECO:0000255" key="4">
    <source>
        <dbReference type="PROSITE-ProRule" id="PRU00315"/>
    </source>
</evidence>
<evidence type="ECO:0000269" key="5">
    <source>
    </source>
</evidence>
<evidence type="ECO:0000305" key="6"/>
<keyword id="KW-0094">Blood coagulation</keyword>
<keyword id="KW-0903">Direct protein sequencing</keyword>
<keyword id="KW-1015">Disulfide bond</keyword>
<keyword id="KW-0280">Fibrinolysis</keyword>
<keyword id="KW-0325">Glycoprotein</keyword>
<keyword id="KW-0356">Hemostasis</keyword>
<keyword id="KW-0378">Hydrolase</keyword>
<keyword id="KW-0395">Inflammatory response</keyword>
<keyword id="KW-0645">Protease</keyword>
<keyword id="KW-1185">Reference proteome</keyword>
<keyword id="KW-0677">Repeat</keyword>
<keyword id="KW-0964">Secreted</keyword>
<keyword id="KW-0720">Serine protease</keyword>
<keyword id="KW-0732">Signal</keyword>
<keyword id="KW-0865">Zymogen</keyword>
<organism>
    <name type="scientific">Rattus norvegicus</name>
    <name type="common">Rat</name>
    <dbReference type="NCBI Taxonomy" id="10116"/>
    <lineage>
        <taxon>Eukaryota</taxon>
        <taxon>Metazoa</taxon>
        <taxon>Chordata</taxon>
        <taxon>Craniata</taxon>
        <taxon>Vertebrata</taxon>
        <taxon>Euteleostomi</taxon>
        <taxon>Mammalia</taxon>
        <taxon>Eutheria</taxon>
        <taxon>Euarchontoglires</taxon>
        <taxon>Glires</taxon>
        <taxon>Rodentia</taxon>
        <taxon>Myomorpha</taxon>
        <taxon>Muroidea</taxon>
        <taxon>Muridae</taxon>
        <taxon>Murinae</taxon>
        <taxon>Rattus</taxon>
    </lineage>
</organism>